<reference key="1">
    <citation type="journal article" date="1993" name="Genomics">
        <title>DNA sequence and analysis of 136 kilobases of the Escherichia coli genome: organizational symmetry around the origin of replication.</title>
        <authorList>
            <person name="Burland V.D."/>
            <person name="Plunkett G. III"/>
            <person name="Daniels D.L."/>
            <person name="Blattner F.R."/>
        </authorList>
    </citation>
    <scope>NUCLEOTIDE SEQUENCE [LARGE SCALE GENOMIC DNA]</scope>
    <source>
        <strain>K12 / MG1655 / ATCC 47076</strain>
    </source>
</reference>
<reference key="2">
    <citation type="journal article" date="1997" name="Science">
        <title>The complete genome sequence of Escherichia coli K-12.</title>
        <authorList>
            <person name="Blattner F.R."/>
            <person name="Plunkett G. III"/>
            <person name="Bloch C.A."/>
            <person name="Perna N.T."/>
            <person name="Burland V."/>
            <person name="Riley M."/>
            <person name="Collado-Vides J."/>
            <person name="Glasner J.D."/>
            <person name="Rode C.K."/>
            <person name="Mayhew G.F."/>
            <person name="Gregor J."/>
            <person name="Davis N.W."/>
            <person name="Kirkpatrick H.A."/>
            <person name="Goeden M.A."/>
            <person name="Rose D.J."/>
            <person name="Mau B."/>
            <person name="Shao Y."/>
        </authorList>
    </citation>
    <scope>NUCLEOTIDE SEQUENCE [LARGE SCALE GENOMIC DNA]</scope>
    <source>
        <strain>K12 / MG1655 / ATCC 47076</strain>
    </source>
</reference>
<reference key="3">
    <citation type="journal article" date="2006" name="Mol. Syst. Biol.">
        <title>Highly accurate genome sequences of Escherichia coli K-12 strains MG1655 and W3110.</title>
        <authorList>
            <person name="Hayashi K."/>
            <person name="Morooka N."/>
            <person name="Yamamoto Y."/>
            <person name="Fujita K."/>
            <person name="Isono K."/>
            <person name="Choi S."/>
            <person name="Ohtsubo E."/>
            <person name="Baba T."/>
            <person name="Wanner B.L."/>
            <person name="Mori H."/>
            <person name="Horiuchi T."/>
        </authorList>
    </citation>
    <scope>NUCLEOTIDE SEQUENCE [LARGE SCALE GENOMIC DNA]</scope>
    <source>
        <strain>K12 / W3110 / ATCC 27325 / DSM 5911</strain>
    </source>
</reference>
<reference key="4">
    <citation type="journal article" date="1992" name="Nucleic Acids Res.">
        <title>Identification of the radC102 mutation. Order of the genes in the 81.5-82.0 min region of the Escherichia coli chromosome.</title>
        <authorList>
            <person name="Felzenszwalb I."/>
            <person name="Boiteux S."/>
            <person name="Laval J."/>
        </authorList>
    </citation>
    <scope>PRELIMINARY NUCLEOTIDE SEQUENCE [GENOMIC DNA] OF 124-222</scope>
    <source>
        <strain>K12</strain>
    </source>
</reference>
<reference key="5">
    <citation type="journal article" date="2000" name="J. Bacteriol.">
        <title>radC102 of Escherichia coli is an allele of recG.</title>
        <authorList>
            <person name="Lombardo M.J."/>
            <person name="Rosenberg S.M."/>
        </authorList>
    </citation>
    <scope>SHOWS THAT THIS IS NOT RADC</scope>
</reference>
<accession>P25531</accession>
<accession>Q2M7V2</accession>
<name>YICR_ECOLI</name>
<organism>
    <name type="scientific">Escherichia coli (strain K12)</name>
    <dbReference type="NCBI Taxonomy" id="83333"/>
    <lineage>
        <taxon>Bacteria</taxon>
        <taxon>Pseudomonadati</taxon>
        <taxon>Pseudomonadota</taxon>
        <taxon>Gammaproteobacteria</taxon>
        <taxon>Enterobacterales</taxon>
        <taxon>Enterobacteriaceae</taxon>
        <taxon>Escherichia</taxon>
    </lineage>
</organism>
<feature type="chain" id="PRO_0000190694" description="UPF0758 protein YicR">
    <location>
        <begin position="1"/>
        <end position="222"/>
    </location>
</feature>
<feature type="domain" description="MPN" evidence="1">
    <location>
        <begin position="100"/>
        <end position="222"/>
    </location>
</feature>
<feature type="short sequence motif" description="JAMM motif" evidence="1">
    <location>
        <begin position="171"/>
        <end position="184"/>
    </location>
</feature>
<feature type="binding site" evidence="1">
    <location>
        <position position="171"/>
    </location>
    <ligand>
        <name>Zn(2+)</name>
        <dbReference type="ChEBI" id="CHEBI:29105"/>
        <note>catalytic</note>
    </ligand>
</feature>
<feature type="binding site" evidence="1">
    <location>
        <position position="173"/>
    </location>
    <ligand>
        <name>Zn(2+)</name>
        <dbReference type="ChEBI" id="CHEBI:29105"/>
        <note>catalytic</note>
    </ligand>
</feature>
<feature type="binding site" evidence="1">
    <location>
        <position position="184"/>
    </location>
    <ligand>
        <name>Zn(2+)</name>
        <dbReference type="ChEBI" id="CHEBI:29105"/>
        <note>catalytic</note>
    </ligand>
</feature>
<gene>
    <name type="primary">yicR</name>
    <name type="ordered locus">b3638</name>
    <name type="ordered locus">JW5643</name>
</gene>
<proteinExistence type="inferred from homology"/>
<evidence type="ECO:0000255" key="1">
    <source>
        <dbReference type="PROSITE-ProRule" id="PRU01182"/>
    </source>
</evidence>
<evidence type="ECO:0000305" key="2"/>
<evidence type="ECO:0000305" key="3">
    <source>
    </source>
</evidence>
<comment type="similarity">
    <text evidence="2">Belongs to the UPF0758 family. YicR subfamily.</text>
</comment>
<comment type="caution">
    <text evidence="3">Was originally thought to be the site of the radC102 mutation, but it was subsequently shown that radC102 is an allele of RecG.</text>
</comment>
<comment type="sequence caution" evidence="2">
    <conflict type="erroneous initiation">
        <sequence resource="EMBL-CDS" id="AAA61991"/>
    </conflict>
    <text>Extended N-terminus.</text>
</comment>
<protein>
    <recommendedName>
        <fullName>UPF0758 protein YicR</fullName>
    </recommendedName>
</protein>
<dbReference type="EMBL" id="L10328">
    <property type="protein sequence ID" value="AAA61991.1"/>
    <property type="status" value="ALT_INIT"/>
    <property type="molecule type" value="Genomic_DNA"/>
</dbReference>
<dbReference type="EMBL" id="U00096">
    <property type="protein sequence ID" value="AAC76662.2"/>
    <property type="molecule type" value="Genomic_DNA"/>
</dbReference>
<dbReference type="EMBL" id="AP009048">
    <property type="protein sequence ID" value="BAE77654.1"/>
    <property type="molecule type" value="Genomic_DNA"/>
</dbReference>
<dbReference type="EMBL" id="X63366">
    <property type="protein sequence ID" value="CAA44966.1"/>
    <property type="molecule type" value="Genomic_DNA"/>
</dbReference>
<dbReference type="EMBL" id="X63367">
    <property type="protein sequence ID" value="CAA44967.1"/>
    <property type="molecule type" value="Genomic_DNA"/>
</dbReference>
<dbReference type="PIR" id="H65164">
    <property type="entry name" value="H65164"/>
</dbReference>
<dbReference type="RefSeq" id="NP_418095.4">
    <property type="nucleotide sequence ID" value="NC_000913.3"/>
</dbReference>
<dbReference type="SMR" id="P25531"/>
<dbReference type="BioGRID" id="4261656">
    <property type="interactions" value="201"/>
</dbReference>
<dbReference type="DIP" id="DIP-10636N"/>
<dbReference type="FunCoup" id="P25531">
    <property type="interactions" value="271"/>
</dbReference>
<dbReference type="IntAct" id="P25531">
    <property type="interactions" value="2"/>
</dbReference>
<dbReference type="STRING" id="511145.b3638"/>
<dbReference type="PaxDb" id="511145-b3638"/>
<dbReference type="EnsemblBacteria" id="AAC76662">
    <property type="protein sequence ID" value="AAC76662"/>
    <property type="gene ID" value="b3638"/>
</dbReference>
<dbReference type="GeneID" id="948968"/>
<dbReference type="KEGG" id="ecj:JW5643"/>
<dbReference type="KEGG" id="eco:b3638"/>
<dbReference type="KEGG" id="ecoc:C3026_19715"/>
<dbReference type="PATRIC" id="fig|511145.12.peg.3758"/>
<dbReference type="EchoBASE" id="EB1288"/>
<dbReference type="eggNOG" id="COG2003">
    <property type="taxonomic scope" value="Bacteria"/>
</dbReference>
<dbReference type="HOGENOM" id="CLU_073529_0_1_6"/>
<dbReference type="InParanoid" id="P25531"/>
<dbReference type="OMA" id="ELMPREK"/>
<dbReference type="OrthoDB" id="9804482at2"/>
<dbReference type="PhylomeDB" id="P25531"/>
<dbReference type="BioCyc" id="EcoCyc:EG11312-MONOMER"/>
<dbReference type="PRO" id="PR:P25531"/>
<dbReference type="Proteomes" id="UP000000625">
    <property type="component" value="Chromosome"/>
</dbReference>
<dbReference type="GO" id="GO:0046872">
    <property type="term" value="F:metal ion binding"/>
    <property type="evidence" value="ECO:0007669"/>
    <property type="project" value="UniProtKB-KW"/>
</dbReference>
<dbReference type="GO" id="GO:0008237">
    <property type="term" value="F:metallopeptidase activity"/>
    <property type="evidence" value="ECO:0007669"/>
    <property type="project" value="UniProtKB-KW"/>
</dbReference>
<dbReference type="GO" id="GO:0006508">
    <property type="term" value="P:proteolysis"/>
    <property type="evidence" value="ECO:0007669"/>
    <property type="project" value="UniProtKB-KW"/>
</dbReference>
<dbReference type="CDD" id="cd08071">
    <property type="entry name" value="MPN_DUF2466"/>
    <property type="match status" value="1"/>
</dbReference>
<dbReference type="Gene3D" id="3.40.140.10">
    <property type="entry name" value="Cytidine Deaminase, domain 2"/>
    <property type="match status" value="1"/>
</dbReference>
<dbReference type="HAMAP" id="MF_00018">
    <property type="entry name" value="UPF0758_YicR"/>
    <property type="match status" value="1"/>
</dbReference>
<dbReference type="InterPro" id="IPR037518">
    <property type="entry name" value="MPN"/>
</dbReference>
<dbReference type="InterPro" id="IPR025657">
    <property type="entry name" value="RadC_JAB"/>
</dbReference>
<dbReference type="InterPro" id="IPR010994">
    <property type="entry name" value="RuvA_2-like"/>
</dbReference>
<dbReference type="InterPro" id="IPR001405">
    <property type="entry name" value="UPF0758"/>
</dbReference>
<dbReference type="InterPro" id="IPR020891">
    <property type="entry name" value="UPF0758_CS"/>
</dbReference>
<dbReference type="InterPro" id="IPR046778">
    <property type="entry name" value="UPF0758_N"/>
</dbReference>
<dbReference type="InterPro" id="IPR022820">
    <property type="entry name" value="UPF0758_YicR"/>
</dbReference>
<dbReference type="NCBIfam" id="NF000642">
    <property type="entry name" value="PRK00024.1"/>
    <property type="match status" value="1"/>
</dbReference>
<dbReference type="NCBIfam" id="TIGR00608">
    <property type="entry name" value="radc"/>
    <property type="match status" value="1"/>
</dbReference>
<dbReference type="PANTHER" id="PTHR30471">
    <property type="entry name" value="DNA REPAIR PROTEIN RADC"/>
    <property type="match status" value="1"/>
</dbReference>
<dbReference type="PANTHER" id="PTHR30471:SF3">
    <property type="entry name" value="UPF0758 PROTEIN YEES-RELATED"/>
    <property type="match status" value="1"/>
</dbReference>
<dbReference type="Pfam" id="PF04002">
    <property type="entry name" value="RadC"/>
    <property type="match status" value="1"/>
</dbReference>
<dbReference type="Pfam" id="PF20582">
    <property type="entry name" value="UPF0758_N"/>
    <property type="match status" value="1"/>
</dbReference>
<dbReference type="SUPFAM" id="SSF47781">
    <property type="entry name" value="RuvA domain 2-like"/>
    <property type="match status" value="1"/>
</dbReference>
<dbReference type="PROSITE" id="PS50249">
    <property type="entry name" value="MPN"/>
    <property type="match status" value="1"/>
</dbReference>
<dbReference type="PROSITE" id="PS01302">
    <property type="entry name" value="UPF0758"/>
    <property type="match status" value="1"/>
</dbReference>
<sequence>MKNNSQLLMPREKMLKFGISALTDVELLALFLRTGTRGKDVLTLAKEMLENFGSLYGLLTSEYEQFSGVHGIGVAKFAQLKGIAELARRYYNVRMREESPLLSPEMTREFLQSQLTGEEREIFMVIFLDSQHRVITHRRLFSGTLNHVEVHPREIIREAIKINASALILAHNHPSGCAEPSKADKLITERIIKSCQFMDLRVLDHIVIGRGEYVSFAERGWI</sequence>
<keyword id="KW-0378">Hydrolase</keyword>
<keyword id="KW-0479">Metal-binding</keyword>
<keyword id="KW-0482">Metalloprotease</keyword>
<keyword id="KW-0645">Protease</keyword>
<keyword id="KW-1185">Reference proteome</keyword>
<keyword id="KW-0862">Zinc</keyword>